<accession>Q85AH1</accession>
<gene>
    <name evidence="1" type="primary">petG</name>
</gene>
<proteinExistence type="evidence at transcript level"/>
<reference key="1">
    <citation type="journal article" date="2003" name="Nucleic Acids Res.">
        <title>The complete nucleotide sequence of the hornwort (Anthoceros formosae) chloroplast genome: insight into the earliest land plants.</title>
        <authorList>
            <person name="Kugita M."/>
            <person name="Kaneko A."/>
            <person name="Yamamoto Y."/>
            <person name="Takeya Y."/>
            <person name="Matsumoto T."/>
            <person name="Yoshinaga K."/>
        </authorList>
    </citation>
    <scope>NUCLEOTIDE SEQUENCE [LARGE SCALE GENOMIC DNA]</scope>
    <scope>RNA EDITING</scope>
</reference>
<reference key="2">
    <citation type="journal article" date="2003" name="Nucleic Acids Res.">
        <title>RNA editing in hornwort chloroplasts makes more than half the genes functional.</title>
        <authorList>
            <person name="Kugita M."/>
            <person name="Yamamoto Y."/>
            <person name="Fujikawa T."/>
            <person name="Matsumoto T."/>
            <person name="Yoshinaga K."/>
        </authorList>
    </citation>
    <scope>NUCLEOTIDE SEQUENCE [MRNA]</scope>
    <scope>RNA EDITING</scope>
    <source>
        <tissue>Thallus</tissue>
    </source>
</reference>
<geneLocation type="chloroplast"/>
<protein>
    <recommendedName>
        <fullName evidence="1">Cytochrome b6-f complex subunit 5</fullName>
    </recommendedName>
    <alternativeName>
        <fullName evidence="1">Cytochrome b6-f complex subunit PetG</fullName>
    </alternativeName>
    <alternativeName>
        <fullName evidence="1">Cytochrome b6-f complex subunit V</fullName>
    </alternativeName>
</protein>
<comment type="function">
    <text evidence="1">Component of the cytochrome b6-f complex, which mediates electron transfer between photosystem II (PSII) and photosystem I (PSI), cyclic electron flow around PSI, and state transitions. PetG is required for either the stability or assembly of the cytochrome b6-f complex.</text>
</comment>
<comment type="subunit">
    <text evidence="1">The 4 large subunits of the cytochrome b6-f complex are cytochrome b6, subunit IV (17 kDa polypeptide, PetD), cytochrome f and the Rieske protein, while the 4 small subunits are PetG, PetL, PetM and PetN. The complex functions as a dimer.</text>
</comment>
<comment type="subcellular location">
    <subcellularLocation>
        <location evidence="1">Plastid</location>
        <location evidence="1">Chloroplast thylakoid membrane</location>
        <topology evidence="1">Single-pass membrane protein</topology>
    </subcellularLocation>
</comment>
<comment type="RNA editing">
    <location>
        <position position="22" evidence="2 3"/>
    </location>
    <location>
        <position position="25" evidence="2 3"/>
    </location>
    <location>
        <position position="28" evidence="2 3"/>
    </location>
    <location>
        <position position="31" evidence="2 3"/>
    </location>
    <location>
        <position position="38" evidence="2 3"/>
    </location>
    <text>The nonsense codon in position 28 is modified to a sense codon. The stop codon at position 38 is created by RNA editing.</text>
</comment>
<comment type="similarity">
    <text evidence="1">Belongs to the PetG family.</text>
</comment>
<sequence>MVEALLSGIVLGLIPITLAGLFVTAYLQYRRGDQLDL</sequence>
<organism>
    <name type="scientific">Anthoceros angustus</name>
    <name type="common">Hornwort</name>
    <name type="synonym">Anthoceros formosae</name>
    <dbReference type="NCBI Taxonomy" id="48387"/>
    <lineage>
        <taxon>Eukaryota</taxon>
        <taxon>Viridiplantae</taxon>
        <taxon>Streptophyta</taxon>
        <taxon>Embryophyta</taxon>
        <taxon>Anthocerotophyta</taxon>
        <taxon>Anthocerotopsida</taxon>
        <taxon>Anthocerotidae</taxon>
        <taxon>Anthocerotales</taxon>
        <taxon>Anthocerotaceae</taxon>
        <taxon>Anthoceros</taxon>
    </lineage>
</organism>
<feature type="chain" id="PRO_0000216367" description="Cytochrome b6-f complex subunit 5">
    <location>
        <begin position="1"/>
        <end position="37"/>
    </location>
</feature>
<feature type="transmembrane region" description="Helical" evidence="1">
    <location>
        <begin position="5"/>
        <end position="25"/>
    </location>
</feature>
<name>PETG_ANTAG</name>
<dbReference type="EMBL" id="AB086179">
    <property type="protein sequence ID" value="BAC55368.1"/>
    <property type="molecule type" value="Genomic_DNA"/>
</dbReference>
<dbReference type="EMBL" id="AB087456">
    <property type="protein sequence ID" value="BAC55464.1"/>
    <property type="molecule type" value="mRNA"/>
</dbReference>
<dbReference type="RefSeq" id="NP_777432.1">
    <property type="nucleotide sequence ID" value="NC_004543.1"/>
</dbReference>
<dbReference type="SMR" id="Q85AH1"/>
<dbReference type="GeneID" id="2553387"/>
<dbReference type="GO" id="GO:0009535">
    <property type="term" value="C:chloroplast thylakoid membrane"/>
    <property type="evidence" value="ECO:0007669"/>
    <property type="project" value="UniProtKB-SubCell"/>
</dbReference>
<dbReference type="GO" id="GO:0009512">
    <property type="term" value="C:cytochrome b6f complex"/>
    <property type="evidence" value="ECO:0007669"/>
    <property type="project" value="InterPro"/>
</dbReference>
<dbReference type="GO" id="GO:0045158">
    <property type="term" value="F:electron transporter, transferring electrons within cytochrome b6/f complex of photosystem II activity"/>
    <property type="evidence" value="ECO:0007669"/>
    <property type="project" value="UniProtKB-UniRule"/>
</dbReference>
<dbReference type="GO" id="GO:0017004">
    <property type="term" value="P:cytochrome complex assembly"/>
    <property type="evidence" value="ECO:0007669"/>
    <property type="project" value="UniProtKB-UniRule"/>
</dbReference>
<dbReference type="GO" id="GO:0015979">
    <property type="term" value="P:photosynthesis"/>
    <property type="evidence" value="ECO:0007669"/>
    <property type="project" value="UniProtKB-KW"/>
</dbReference>
<dbReference type="HAMAP" id="MF_00432">
    <property type="entry name" value="Cytb6_f_PetG"/>
    <property type="match status" value="1"/>
</dbReference>
<dbReference type="InterPro" id="IPR003683">
    <property type="entry name" value="Cyt_6/f_cplx_su5"/>
</dbReference>
<dbReference type="InterPro" id="IPR036099">
    <property type="entry name" value="Cyt_6/f_cplx_su5_sf"/>
</dbReference>
<dbReference type="NCBIfam" id="NF001907">
    <property type="entry name" value="PRK00665.1"/>
    <property type="match status" value="1"/>
</dbReference>
<dbReference type="Pfam" id="PF02529">
    <property type="entry name" value="PetG"/>
    <property type="match status" value="1"/>
</dbReference>
<dbReference type="PIRSF" id="PIRSF000034">
    <property type="entry name" value="Cyt_b6-f_V"/>
    <property type="match status" value="1"/>
</dbReference>
<dbReference type="SUPFAM" id="SSF103446">
    <property type="entry name" value="PetG subunit of the cytochrome b6f complex"/>
    <property type="match status" value="1"/>
</dbReference>
<evidence type="ECO:0000255" key="1">
    <source>
        <dbReference type="HAMAP-Rule" id="MF_00432"/>
    </source>
</evidence>
<evidence type="ECO:0000269" key="2">
    <source>
    </source>
</evidence>
<evidence type="ECO:0000269" key="3">
    <source>
    </source>
</evidence>
<keyword id="KW-0150">Chloroplast</keyword>
<keyword id="KW-0249">Electron transport</keyword>
<keyword id="KW-0472">Membrane</keyword>
<keyword id="KW-0602">Photosynthesis</keyword>
<keyword id="KW-0934">Plastid</keyword>
<keyword id="KW-0691">RNA editing</keyword>
<keyword id="KW-0793">Thylakoid</keyword>
<keyword id="KW-0812">Transmembrane</keyword>
<keyword id="KW-1133">Transmembrane helix</keyword>
<keyword id="KW-0813">Transport</keyword>